<accession>Q2A472</accession>
<proteinExistence type="inferred from homology"/>
<sequence length="338" mass="38358">MKTDDFDYKLPEELIASYPLENRDASRLLKLNKQTGEIADYKFTDFIDFINPGDLLVFNNSKVMLARLYGSKTTGAKLEYLIERIKNPKLFETHIKANRSPAIGSEIYVEDTLAKVLDKDGGMYLLEIQGDKDIYQLMEEFGHIPLPPYMKRDDEEFDAERYQTVYAQDLGSVAALTAGLHFSKELMQQIKDKGVDIAYITLHVGSGTFKPVQVDDVESHKMHAEVISVPVEVCQKIRQTKENGGRVITIGTTSVRSLETAGQNGQIEPYQGETDIFLYPGKKFNVVDAMITNFHLPKSTLIMLVSAFADKEKIIKAYEHAIAERYRFFSYGDAMFIF</sequence>
<protein>
    <recommendedName>
        <fullName evidence="1">S-adenosylmethionine:tRNA ribosyltransferase-isomerase</fullName>
        <ecNumber evidence="1">2.4.99.17</ecNumber>
    </recommendedName>
    <alternativeName>
        <fullName evidence="1">Queuosine biosynthesis protein QueA</fullName>
    </alternativeName>
</protein>
<reference key="1">
    <citation type="submission" date="2006-03" db="EMBL/GenBank/DDBJ databases">
        <title>Complete genome sequence of Francisella tularensis LVS (Live Vaccine Strain).</title>
        <authorList>
            <person name="Chain P."/>
            <person name="Larimer F."/>
            <person name="Land M."/>
            <person name="Stilwagen S."/>
            <person name="Larsson P."/>
            <person name="Bearden S."/>
            <person name="Chu M."/>
            <person name="Oyston P."/>
            <person name="Forsman M."/>
            <person name="Andersson S."/>
            <person name="Lindler L."/>
            <person name="Titball R."/>
            <person name="Garcia E."/>
        </authorList>
    </citation>
    <scope>NUCLEOTIDE SEQUENCE [LARGE SCALE GENOMIC DNA]</scope>
    <source>
        <strain>LVS</strain>
    </source>
</reference>
<name>QUEA_FRATH</name>
<organism>
    <name type="scientific">Francisella tularensis subsp. holarctica (strain LVS)</name>
    <dbReference type="NCBI Taxonomy" id="376619"/>
    <lineage>
        <taxon>Bacteria</taxon>
        <taxon>Pseudomonadati</taxon>
        <taxon>Pseudomonadota</taxon>
        <taxon>Gammaproteobacteria</taxon>
        <taxon>Thiotrichales</taxon>
        <taxon>Francisellaceae</taxon>
        <taxon>Francisella</taxon>
    </lineage>
</organism>
<comment type="function">
    <text evidence="1">Transfers and isomerizes the ribose moiety from AdoMet to the 7-aminomethyl group of 7-deazaguanine (preQ1-tRNA) to give epoxyqueuosine (oQ-tRNA).</text>
</comment>
<comment type="catalytic activity">
    <reaction evidence="1">
        <text>7-aminomethyl-7-carbaguanosine(34) in tRNA + S-adenosyl-L-methionine = epoxyqueuosine(34) in tRNA + adenine + L-methionine + 2 H(+)</text>
        <dbReference type="Rhea" id="RHEA:32155"/>
        <dbReference type="Rhea" id="RHEA-COMP:10342"/>
        <dbReference type="Rhea" id="RHEA-COMP:18582"/>
        <dbReference type="ChEBI" id="CHEBI:15378"/>
        <dbReference type="ChEBI" id="CHEBI:16708"/>
        <dbReference type="ChEBI" id="CHEBI:57844"/>
        <dbReference type="ChEBI" id="CHEBI:59789"/>
        <dbReference type="ChEBI" id="CHEBI:82833"/>
        <dbReference type="ChEBI" id="CHEBI:194443"/>
        <dbReference type="EC" id="2.4.99.17"/>
    </reaction>
</comment>
<comment type="pathway">
    <text evidence="1">tRNA modification; tRNA-queuosine biosynthesis.</text>
</comment>
<comment type="subunit">
    <text evidence="1">Monomer.</text>
</comment>
<comment type="subcellular location">
    <subcellularLocation>
        <location evidence="1">Cytoplasm</location>
    </subcellularLocation>
</comment>
<comment type="similarity">
    <text evidence="1">Belongs to the QueA family.</text>
</comment>
<evidence type="ECO:0000255" key="1">
    <source>
        <dbReference type="HAMAP-Rule" id="MF_00113"/>
    </source>
</evidence>
<dbReference type="EC" id="2.4.99.17" evidence="1"/>
<dbReference type="EMBL" id="AM233362">
    <property type="protein sequence ID" value="CAJ79168.1"/>
    <property type="molecule type" value="Genomic_DNA"/>
</dbReference>
<dbReference type="RefSeq" id="WP_010030758.1">
    <property type="nucleotide sequence ID" value="NZ_CP009694.1"/>
</dbReference>
<dbReference type="SMR" id="Q2A472"/>
<dbReference type="KEGG" id="ftl:FTL_0729"/>
<dbReference type="UniPathway" id="UPA00392"/>
<dbReference type="Proteomes" id="UP000001944">
    <property type="component" value="Chromosome"/>
</dbReference>
<dbReference type="GO" id="GO:0005737">
    <property type="term" value="C:cytoplasm"/>
    <property type="evidence" value="ECO:0007669"/>
    <property type="project" value="UniProtKB-SubCell"/>
</dbReference>
<dbReference type="GO" id="GO:0051075">
    <property type="term" value="F:S-adenosylmethionine:tRNA ribosyltransferase-isomerase activity"/>
    <property type="evidence" value="ECO:0007669"/>
    <property type="project" value="UniProtKB-EC"/>
</dbReference>
<dbReference type="GO" id="GO:0008616">
    <property type="term" value="P:queuosine biosynthetic process"/>
    <property type="evidence" value="ECO:0007669"/>
    <property type="project" value="UniProtKB-UniRule"/>
</dbReference>
<dbReference type="GO" id="GO:0002099">
    <property type="term" value="P:tRNA wobble guanine modification"/>
    <property type="evidence" value="ECO:0007669"/>
    <property type="project" value="TreeGrafter"/>
</dbReference>
<dbReference type="FunFam" id="3.40.1780.10:FF:000001">
    <property type="entry name" value="S-adenosylmethionine:tRNA ribosyltransferase-isomerase"/>
    <property type="match status" value="1"/>
</dbReference>
<dbReference type="Gene3D" id="2.40.10.240">
    <property type="entry name" value="QueA-like"/>
    <property type="match status" value="1"/>
</dbReference>
<dbReference type="Gene3D" id="3.40.1780.10">
    <property type="entry name" value="QueA-like"/>
    <property type="match status" value="1"/>
</dbReference>
<dbReference type="HAMAP" id="MF_00113">
    <property type="entry name" value="QueA"/>
    <property type="match status" value="1"/>
</dbReference>
<dbReference type="InterPro" id="IPR003699">
    <property type="entry name" value="QueA"/>
</dbReference>
<dbReference type="InterPro" id="IPR042118">
    <property type="entry name" value="QueA_dom1"/>
</dbReference>
<dbReference type="InterPro" id="IPR042119">
    <property type="entry name" value="QueA_dom2"/>
</dbReference>
<dbReference type="InterPro" id="IPR036100">
    <property type="entry name" value="QueA_sf"/>
</dbReference>
<dbReference type="NCBIfam" id="NF001140">
    <property type="entry name" value="PRK00147.1"/>
    <property type="match status" value="1"/>
</dbReference>
<dbReference type="NCBIfam" id="TIGR00113">
    <property type="entry name" value="queA"/>
    <property type="match status" value="1"/>
</dbReference>
<dbReference type="PANTHER" id="PTHR30307">
    <property type="entry name" value="S-ADENOSYLMETHIONINE:TRNA RIBOSYLTRANSFERASE-ISOMERASE"/>
    <property type="match status" value="1"/>
</dbReference>
<dbReference type="PANTHER" id="PTHR30307:SF0">
    <property type="entry name" value="S-ADENOSYLMETHIONINE:TRNA RIBOSYLTRANSFERASE-ISOMERASE"/>
    <property type="match status" value="1"/>
</dbReference>
<dbReference type="Pfam" id="PF02547">
    <property type="entry name" value="Queuosine_synth"/>
    <property type="match status" value="1"/>
</dbReference>
<dbReference type="SUPFAM" id="SSF111337">
    <property type="entry name" value="QueA-like"/>
    <property type="match status" value="1"/>
</dbReference>
<gene>
    <name evidence="1" type="primary">queA</name>
    <name type="ordered locus">FTL_0729</name>
</gene>
<keyword id="KW-0963">Cytoplasm</keyword>
<keyword id="KW-0671">Queuosine biosynthesis</keyword>
<keyword id="KW-1185">Reference proteome</keyword>
<keyword id="KW-0949">S-adenosyl-L-methionine</keyword>
<keyword id="KW-0808">Transferase</keyword>
<feature type="chain" id="PRO_1000071337" description="S-adenosylmethionine:tRNA ribosyltransferase-isomerase">
    <location>
        <begin position="1"/>
        <end position="338"/>
    </location>
</feature>